<gene>
    <name type="primary">HSF5</name>
    <name type="synonym">HSTF5</name>
</gene>
<dbReference type="EMBL" id="AC005666">
    <property type="status" value="NOT_ANNOTATED_CDS"/>
    <property type="molecule type" value="Genomic_DNA"/>
</dbReference>
<dbReference type="EMBL" id="AC023992">
    <property type="status" value="NOT_ANNOTATED_CDS"/>
    <property type="molecule type" value="Genomic_DNA"/>
</dbReference>
<dbReference type="EMBL" id="BC033017">
    <property type="protein sequence ID" value="AAH33017.1"/>
    <property type="molecule type" value="mRNA"/>
</dbReference>
<dbReference type="EMBL" id="BC033020">
    <property type="protein sequence ID" value="AAH33020.1"/>
    <property type="molecule type" value="mRNA"/>
</dbReference>
<dbReference type="EMBL" id="BC115385">
    <property type="protein sequence ID" value="AAI15386.1"/>
    <property type="molecule type" value="mRNA"/>
</dbReference>
<dbReference type="EMBL" id="AK097630">
    <property type="protein sequence ID" value="BAC05124.1"/>
    <property type="molecule type" value="mRNA"/>
</dbReference>
<dbReference type="CCDS" id="CCDS32690.1">
    <molecule id="Q4G112-1"/>
</dbReference>
<dbReference type="RefSeq" id="NP_001073908.2">
    <molecule id="Q4G112-1"/>
    <property type="nucleotide sequence ID" value="NM_001080439.3"/>
</dbReference>
<dbReference type="SMR" id="Q4G112"/>
<dbReference type="BioGRID" id="125871">
    <property type="interactions" value="5"/>
</dbReference>
<dbReference type="FunCoup" id="Q4G112">
    <property type="interactions" value="234"/>
</dbReference>
<dbReference type="IntAct" id="Q4G112">
    <property type="interactions" value="2"/>
</dbReference>
<dbReference type="STRING" id="9606.ENSP00000313243"/>
<dbReference type="GlyGen" id="Q4G112">
    <property type="glycosylation" value="1 site"/>
</dbReference>
<dbReference type="iPTMnet" id="Q4G112"/>
<dbReference type="PhosphoSitePlus" id="Q4G112"/>
<dbReference type="BioMuta" id="HSF5"/>
<dbReference type="DMDM" id="296434535"/>
<dbReference type="MassIVE" id="Q4G112"/>
<dbReference type="PaxDb" id="9606-ENSP00000313243"/>
<dbReference type="PeptideAtlas" id="Q4G112"/>
<dbReference type="ProteomicsDB" id="62150">
    <molecule id="Q4G112-1"/>
</dbReference>
<dbReference type="ProteomicsDB" id="62151">
    <molecule id="Q4G112-2"/>
</dbReference>
<dbReference type="Antibodypedia" id="18396">
    <property type="antibodies" value="92 antibodies from 22 providers"/>
</dbReference>
<dbReference type="DNASU" id="124535"/>
<dbReference type="Ensembl" id="ENST00000323777.8">
    <molecule id="Q4G112-1"/>
    <property type="protein sequence ID" value="ENSP00000313243.3"/>
    <property type="gene ID" value="ENSG00000176160.11"/>
</dbReference>
<dbReference type="GeneID" id="124535"/>
<dbReference type="KEGG" id="hsa:124535"/>
<dbReference type="MANE-Select" id="ENST00000323777.8">
    <property type="protein sequence ID" value="ENSP00000313243.3"/>
    <property type="RefSeq nucleotide sequence ID" value="NM_001080439.3"/>
    <property type="RefSeq protein sequence ID" value="NP_001073908.2"/>
</dbReference>
<dbReference type="UCSC" id="uc002iwi.2">
    <molecule id="Q4G112-1"/>
    <property type="organism name" value="human"/>
</dbReference>
<dbReference type="AGR" id="HGNC:26862"/>
<dbReference type="CTD" id="124535"/>
<dbReference type="DisGeNET" id="124535"/>
<dbReference type="GeneCards" id="HSF5"/>
<dbReference type="HGNC" id="HGNC:26862">
    <property type="gene designation" value="HSF5"/>
</dbReference>
<dbReference type="HPA" id="ENSG00000176160">
    <property type="expression patterns" value="Tissue enriched (testis)"/>
</dbReference>
<dbReference type="MIM" id="620843">
    <property type="type" value="gene"/>
</dbReference>
<dbReference type="neXtProt" id="NX_Q4G112"/>
<dbReference type="OpenTargets" id="ENSG00000176160"/>
<dbReference type="PharmGKB" id="PA145008204"/>
<dbReference type="VEuPathDB" id="HostDB:ENSG00000176160"/>
<dbReference type="eggNOG" id="KOG1508">
    <property type="taxonomic scope" value="Eukaryota"/>
</dbReference>
<dbReference type="GeneTree" id="ENSGT00510000048674"/>
<dbReference type="HOGENOM" id="CLU_037490_1_0_1"/>
<dbReference type="InParanoid" id="Q4G112"/>
<dbReference type="OMA" id="HRIWQNS"/>
<dbReference type="OrthoDB" id="6418155at2759"/>
<dbReference type="PAN-GO" id="Q4G112">
    <property type="GO annotations" value="4 GO annotations based on evolutionary models"/>
</dbReference>
<dbReference type="PhylomeDB" id="Q4G112"/>
<dbReference type="TreeFam" id="TF330401"/>
<dbReference type="PathwayCommons" id="Q4G112"/>
<dbReference type="SignaLink" id="Q4G112"/>
<dbReference type="BioGRID-ORCS" id="124535">
    <property type="hits" value="18 hits in 1153 CRISPR screens"/>
</dbReference>
<dbReference type="ChiTaRS" id="HSF5">
    <property type="organism name" value="human"/>
</dbReference>
<dbReference type="GenomeRNAi" id="124535"/>
<dbReference type="Pharos" id="Q4G112">
    <property type="development level" value="Tbio"/>
</dbReference>
<dbReference type="PRO" id="PR:Q4G112"/>
<dbReference type="Proteomes" id="UP000005640">
    <property type="component" value="Chromosome 17"/>
</dbReference>
<dbReference type="RNAct" id="Q4G112">
    <property type="molecule type" value="protein"/>
</dbReference>
<dbReference type="Bgee" id="ENSG00000176160">
    <property type="expression patterns" value="Expressed in sperm and 34 other cell types or tissues"/>
</dbReference>
<dbReference type="GO" id="GO:0005634">
    <property type="term" value="C:nucleus"/>
    <property type="evidence" value="ECO:0007669"/>
    <property type="project" value="UniProtKB-SubCell"/>
</dbReference>
<dbReference type="GO" id="GO:0001741">
    <property type="term" value="C:XY body"/>
    <property type="evidence" value="ECO:0007669"/>
    <property type="project" value="Ensembl"/>
</dbReference>
<dbReference type="GO" id="GO:0001216">
    <property type="term" value="F:DNA-binding transcription activator activity"/>
    <property type="evidence" value="ECO:0007669"/>
    <property type="project" value="Ensembl"/>
</dbReference>
<dbReference type="GO" id="GO:0001217">
    <property type="term" value="F:DNA-binding transcription repressor activity"/>
    <property type="evidence" value="ECO:0007669"/>
    <property type="project" value="Ensembl"/>
</dbReference>
<dbReference type="GO" id="GO:1990837">
    <property type="term" value="F:sequence-specific double-stranded DNA binding"/>
    <property type="evidence" value="ECO:0000314"/>
    <property type="project" value="ARUK-UCL"/>
</dbReference>
<dbReference type="GO" id="GO:0030154">
    <property type="term" value="P:cell differentiation"/>
    <property type="evidence" value="ECO:0007669"/>
    <property type="project" value="UniProtKB-KW"/>
</dbReference>
<dbReference type="GO" id="GO:0007140">
    <property type="term" value="P:male meiotic nuclear division"/>
    <property type="evidence" value="ECO:0007669"/>
    <property type="project" value="Ensembl"/>
</dbReference>
<dbReference type="GO" id="GO:0007283">
    <property type="term" value="P:spermatogenesis"/>
    <property type="evidence" value="ECO:0007669"/>
    <property type="project" value="UniProtKB-KW"/>
</dbReference>
<dbReference type="FunFam" id="1.10.10.10:FF:000531">
    <property type="entry name" value="Heat shock transcription factor 5"/>
    <property type="match status" value="1"/>
</dbReference>
<dbReference type="Gene3D" id="1.10.10.10">
    <property type="entry name" value="Winged helix-like DNA-binding domain superfamily/Winged helix DNA-binding domain"/>
    <property type="match status" value="1"/>
</dbReference>
<dbReference type="InterPro" id="IPR000232">
    <property type="entry name" value="HSF_DNA-bd"/>
</dbReference>
<dbReference type="InterPro" id="IPR036388">
    <property type="entry name" value="WH-like_DNA-bd_sf"/>
</dbReference>
<dbReference type="InterPro" id="IPR036390">
    <property type="entry name" value="WH_DNA-bd_sf"/>
</dbReference>
<dbReference type="PANTHER" id="PTHR10015:SF278">
    <property type="entry name" value="HEAT SHOCK FACTOR PROTEIN 5"/>
    <property type="match status" value="1"/>
</dbReference>
<dbReference type="PANTHER" id="PTHR10015">
    <property type="entry name" value="HEAT SHOCK TRANSCRIPTION FACTOR"/>
    <property type="match status" value="1"/>
</dbReference>
<dbReference type="Pfam" id="PF00447">
    <property type="entry name" value="HSF_DNA-bind"/>
    <property type="match status" value="1"/>
</dbReference>
<dbReference type="SMART" id="SM00415">
    <property type="entry name" value="HSF"/>
    <property type="match status" value="1"/>
</dbReference>
<dbReference type="SUPFAM" id="SSF46785">
    <property type="entry name" value="Winged helix' DNA-binding domain"/>
    <property type="match status" value="1"/>
</dbReference>
<feature type="chain" id="PRO_0000333041" description="Heat shock factor protein 5">
    <location>
        <begin position="1"/>
        <end position="596"/>
    </location>
</feature>
<feature type="DNA-binding region" evidence="1">
    <location>
        <begin position="10"/>
        <end position="200"/>
    </location>
</feature>
<feature type="region of interest" description="Disordered" evidence="3">
    <location>
        <begin position="541"/>
        <end position="576"/>
    </location>
</feature>
<feature type="modified residue" description="Phosphoserine" evidence="2">
    <location>
        <position position="572"/>
    </location>
</feature>
<feature type="splice variant" id="VSP_033454" description="In isoform 2." evidence="4">
    <location>
        <begin position="53"/>
        <end position="173"/>
    </location>
</feature>
<feature type="sequence variant" id="VAR_043115" description="In dbSNP:rs1017089.">
    <original>T</original>
    <variation>N</variation>
    <location>
        <position position="329"/>
    </location>
</feature>
<feature type="sequence variant" id="VAR_055935" description="In dbSNP:rs3803752.">
    <original>S</original>
    <variation>N</variation>
    <location>
        <position position="473"/>
    </location>
</feature>
<reference key="1">
    <citation type="journal article" date="2006" name="Nature">
        <title>DNA sequence of human chromosome 17 and analysis of rearrangement in the human lineage.</title>
        <authorList>
            <person name="Zody M.C."/>
            <person name="Garber M."/>
            <person name="Adams D.J."/>
            <person name="Sharpe T."/>
            <person name="Harrow J."/>
            <person name="Lupski J.R."/>
            <person name="Nicholson C."/>
            <person name="Searle S.M."/>
            <person name="Wilming L."/>
            <person name="Young S.K."/>
            <person name="Abouelleil A."/>
            <person name="Allen N.R."/>
            <person name="Bi W."/>
            <person name="Bloom T."/>
            <person name="Borowsky M.L."/>
            <person name="Bugalter B.E."/>
            <person name="Butler J."/>
            <person name="Chang J.L."/>
            <person name="Chen C.-K."/>
            <person name="Cook A."/>
            <person name="Corum B."/>
            <person name="Cuomo C.A."/>
            <person name="de Jong P.J."/>
            <person name="DeCaprio D."/>
            <person name="Dewar K."/>
            <person name="FitzGerald M."/>
            <person name="Gilbert J."/>
            <person name="Gibson R."/>
            <person name="Gnerre S."/>
            <person name="Goldstein S."/>
            <person name="Grafham D.V."/>
            <person name="Grocock R."/>
            <person name="Hafez N."/>
            <person name="Hagopian D.S."/>
            <person name="Hart E."/>
            <person name="Norman C.H."/>
            <person name="Humphray S."/>
            <person name="Jaffe D.B."/>
            <person name="Jones M."/>
            <person name="Kamal M."/>
            <person name="Khodiyar V.K."/>
            <person name="LaButti K."/>
            <person name="Laird G."/>
            <person name="Lehoczky J."/>
            <person name="Liu X."/>
            <person name="Lokyitsang T."/>
            <person name="Loveland J."/>
            <person name="Lui A."/>
            <person name="Macdonald P."/>
            <person name="Major J.E."/>
            <person name="Matthews L."/>
            <person name="Mauceli E."/>
            <person name="McCarroll S.A."/>
            <person name="Mihalev A.H."/>
            <person name="Mudge J."/>
            <person name="Nguyen C."/>
            <person name="Nicol R."/>
            <person name="O'Leary S.B."/>
            <person name="Osoegawa K."/>
            <person name="Schwartz D.C."/>
            <person name="Shaw-Smith C."/>
            <person name="Stankiewicz P."/>
            <person name="Steward C."/>
            <person name="Swarbreck D."/>
            <person name="Venkataraman V."/>
            <person name="Whittaker C.A."/>
            <person name="Yang X."/>
            <person name="Zimmer A.R."/>
            <person name="Bradley A."/>
            <person name="Hubbard T."/>
            <person name="Birren B.W."/>
            <person name="Rogers J."/>
            <person name="Lander E.S."/>
            <person name="Nusbaum C."/>
        </authorList>
    </citation>
    <scope>NUCLEOTIDE SEQUENCE [LARGE SCALE GENOMIC DNA]</scope>
</reference>
<reference key="2">
    <citation type="journal article" date="2004" name="Genome Res.">
        <title>The status, quality, and expansion of the NIH full-length cDNA project: the Mammalian Gene Collection (MGC).</title>
        <authorList>
            <consortium name="The MGC Project Team"/>
        </authorList>
    </citation>
    <scope>NUCLEOTIDE SEQUENCE [LARGE SCALE MRNA] (ISOFORMS 1 AND 2)</scope>
    <source>
        <tissue>Testis</tissue>
    </source>
</reference>
<reference key="3">
    <citation type="journal article" date="2004" name="Nat. Genet.">
        <title>Complete sequencing and characterization of 21,243 full-length human cDNAs.</title>
        <authorList>
            <person name="Ota T."/>
            <person name="Suzuki Y."/>
            <person name="Nishikawa T."/>
            <person name="Otsuki T."/>
            <person name="Sugiyama T."/>
            <person name="Irie R."/>
            <person name="Wakamatsu A."/>
            <person name="Hayashi K."/>
            <person name="Sato H."/>
            <person name="Nagai K."/>
            <person name="Kimura K."/>
            <person name="Makita H."/>
            <person name="Sekine M."/>
            <person name="Obayashi M."/>
            <person name="Nishi T."/>
            <person name="Shibahara T."/>
            <person name="Tanaka T."/>
            <person name="Ishii S."/>
            <person name="Yamamoto J."/>
            <person name="Saito K."/>
            <person name="Kawai Y."/>
            <person name="Isono Y."/>
            <person name="Nakamura Y."/>
            <person name="Nagahari K."/>
            <person name="Murakami K."/>
            <person name="Yasuda T."/>
            <person name="Iwayanagi T."/>
            <person name="Wagatsuma M."/>
            <person name="Shiratori A."/>
            <person name="Sudo H."/>
            <person name="Hosoiri T."/>
            <person name="Kaku Y."/>
            <person name="Kodaira H."/>
            <person name="Kondo H."/>
            <person name="Sugawara M."/>
            <person name="Takahashi M."/>
            <person name="Kanda K."/>
            <person name="Yokoi T."/>
            <person name="Furuya T."/>
            <person name="Kikkawa E."/>
            <person name="Omura Y."/>
            <person name="Abe K."/>
            <person name="Kamihara K."/>
            <person name="Katsuta N."/>
            <person name="Sato K."/>
            <person name="Tanikawa M."/>
            <person name="Yamazaki M."/>
            <person name="Ninomiya K."/>
            <person name="Ishibashi T."/>
            <person name="Yamashita H."/>
            <person name="Murakawa K."/>
            <person name="Fujimori K."/>
            <person name="Tanai H."/>
            <person name="Kimata M."/>
            <person name="Watanabe M."/>
            <person name="Hiraoka S."/>
            <person name="Chiba Y."/>
            <person name="Ishida S."/>
            <person name="Ono Y."/>
            <person name="Takiguchi S."/>
            <person name="Watanabe S."/>
            <person name="Yosida M."/>
            <person name="Hotuta T."/>
            <person name="Kusano J."/>
            <person name="Kanehori K."/>
            <person name="Takahashi-Fujii A."/>
            <person name="Hara H."/>
            <person name="Tanase T.-O."/>
            <person name="Nomura Y."/>
            <person name="Togiya S."/>
            <person name="Komai F."/>
            <person name="Hara R."/>
            <person name="Takeuchi K."/>
            <person name="Arita M."/>
            <person name="Imose N."/>
            <person name="Musashino K."/>
            <person name="Yuuki H."/>
            <person name="Oshima A."/>
            <person name="Sasaki N."/>
            <person name="Aotsuka S."/>
            <person name="Yoshikawa Y."/>
            <person name="Matsunawa H."/>
            <person name="Ichihara T."/>
            <person name="Shiohata N."/>
            <person name="Sano S."/>
            <person name="Moriya S."/>
            <person name="Momiyama H."/>
            <person name="Satoh N."/>
            <person name="Takami S."/>
            <person name="Terashima Y."/>
            <person name="Suzuki O."/>
            <person name="Nakagawa S."/>
            <person name="Senoh A."/>
            <person name="Mizoguchi H."/>
            <person name="Goto Y."/>
            <person name="Shimizu F."/>
            <person name="Wakebe H."/>
            <person name="Hishigaki H."/>
            <person name="Watanabe T."/>
            <person name="Sugiyama A."/>
            <person name="Takemoto M."/>
            <person name="Kawakami B."/>
            <person name="Yamazaki M."/>
            <person name="Watanabe K."/>
            <person name="Kumagai A."/>
            <person name="Itakura S."/>
            <person name="Fukuzumi Y."/>
            <person name="Fujimori Y."/>
            <person name="Komiyama M."/>
            <person name="Tashiro H."/>
            <person name="Tanigami A."/>
            <person name="Fujiwara T."/>
            <person name="Ono T."/>
            <person name="Yamada K."/>
            <person name="Fujii Y."/>
            <person name="Ozaki K."/>
            <person name="Hirao M."/>
            <person name="Ohmori Y."/>
            <person name="Kawabata A."/>
            <person name="Hikiji T."/>
            <person name="Kobatake N."/>
            <person name="Inagaki H."/>
            <person name="Ikema Y."/>
            <person name="Okamoto S."/>
            <person name="Okitani R."/>
            <person name="Kawakami T."/>
            <person name="Noguchi S."/>
            <person name="Itoh T."/>
            <person name="Shigeta K."/>
            <person name="Senba T."/>
            <person name="Matsumura K."/>
            <person name="Nakajima Y."/>
            <person name="Mizuno T."/>
            <person name="Morinaga M."/>
            <person name="Sasaki M."/>
            <person name="Togashi T."/>
            <person name="Oyama M."/>
            <person name="Hata H."/>
            <person name="Watanabe M."/>
            <person name="Komatsu T."/>
            <person name="Mizushima-Sugano J."/>
            <person name="Satoh T."/>
            <person name="Shirai Y."/>
            <person name="Takahashi Y."/>
            <person name="Nakagawa K."/>
            <person name="Okumura K."/>
            <person name="Nagase T."/>
            <person name="Nomura N."/>
            <person name="Kikuchi H."/>
            <person name="Masuho Y."/>
            <person name="Yamashita R."/>
            <person name="Nakai K."/>
            <person name="Yada T."/>
            <person name="Nakamura Y."/>
            <person name="Ohara O."/>
            <person name="Isogai T."/>
            <person name="Sugano S."/>
        </authorList>
    </citation>
    <scope>NUCLEOTIDE SEQUENCE [LARGE SCALE MRNA] OF 319-596 (ISOFORMS 1 AND 2)</scope>
    <source>
        <tissue>Testis</tissue>
    </source>
</reference>
<organism>
    <name type="scientific">Homo sapiens</name>
    <name type="common">Human</name>
    <dbReference type="NCBI Taxonomy" id="9606"/>
    <lineage>
        <taxon>Eukaryota</taxon>
        <taxon>Metazoa</taxon>
        <taxon>Chordata</taxon>
        <taxon>Craniata</taxon>
        <taxon>Vertebrata</taxon>
        <taxon>Euteleostomi</taxon>
        <taxon>Mammalia</taxon>
        <taxon>Eutheria</taxon>
        <taxon>Euarchontoglires</taxon>
        <taxon>Primates</taxon>
        <taxon>Haplorrhini</taxon>
        <taxon>Catarrhini</taxon>
        <taxon>Hominidae</taxon>
        <taxon>Homo</taxon>
    </lineage>
</organism>
<protein>
    <recommendedName>
        <fullName>Heat shock factor protein 5</fullName>
        <shortName>HSF 5</shortName>
    </recommendedName>
    <alternativeName>
        <fullName>Heat shock transcription factor 5</fullName>
        <shortName>HSTF 5</shortName>
    </alternativeName>
</protein>
<accession>Q4G112</accession>
<accession>Q08EH7</accession>
<accession>Q8N7V2</accession>
<evidence type="ECO:0000250" key="1"/>
<evidence type="ECO:0000250" key="2">
    <source>
        <dbReference type="UniProtKB" id="Q5ND04"/>
    </source>
</evidence>
<evidence type="ECO:0000256" key="3">
    <source>
        <dbReference type="SAM" id="MobiDB-lite"/>
    </source>
</evidence>
<evidence type="ECO:0000303" key="4">
    <source>
    </source>
</evidence>
<evidence type="ECO:0000305" key="5"/>
<comment type="function">
    <text evidence="2">DNA-binding transcription factor that is essential for male fertility, spermatogenesis and meiotic prophase progression in spermatocytes under non-stress conditions. Positvely and negatively regulates gene expression to ensure progression of meiotic prophase beyond pachytene stage in spermatocytes. Plays a role in male germline meiotic sex chromosome remodeling and silencing through regulation of SMARCA4.</text>
</comment>
<comment type="subunit">
    <text evidence="2">Homooligomer.</text>
</comment>
<comment type="subcellular location">
    <subcellularLocation>
        <location evidence="2">Nucleus</location>
    </subcellularLocation>
    <subcellularLocation>
        <location evidence="2">Chromosome</location>
    </subcellularLocation>
    <text evidence="2">Expressed primarily in the XY body of pachytene spermatocytes.</text>
</comment>
<comment type="alternative products">
    <event type="alternative splicing"/>
    <isoform>
        <id>Q4G112-1</id>
        <name>1</name>
        <sequence type="displayed"/>
    </isoform>
    <isoform>
        <id>Q4G112-2</id>
        <name>2</name>
        <sequence type="described" ref="VSP_033454"/>
    </isoform>
</comment>
<comment type="similarity">
    <text evidence="5">Belongs to the HSF family.</text>
</comment>
<sequence length="596" mass="65265">MEALLSTPINPNNFPAKLWRLVNSPRYRSIRWDGRGEGLLIDQPLFEAELLSPPGPGGGGGTAGAGAEPELFKTTSFTSFIRQLNLYGFRKVVLGGPGGGKPAGNGPLHHFHNPHFRRDQPQLLVHLKRLTSANKAKLAAGLEVPCRPPNRFQRLLITSASAATAPLQHQQPPPPAGPRPEPHGPVAVGQFHRSFRRDSLSPYSCVSTPSHDHSTYPLKGLDRTPVPHRIWQNSLGMHPGQVETSPTFSDKGVPFPVLQRFPTEVTYTLQPSTTSVHVQQGPQTMVSSSQKYSNYTPSAQYSQAYYPTAVLQCCSPTHMDALSSCVTPTASSYAHCNYFQNPSMQSSYPVEFLPSNWPCSTTDENTKTEVNLEAVFQIVDELHSSPKLEMVKVEPVENQCPTSPSYRGQHILANSNNSNPCSASQASQLEPLTPVGSDIMSFVVGTEQAVACSLPQSPEYIYTIHTAQPVENSTIQESAAIQQAHVKLKEHLNHNPSPSSVVFVQEGPPFSTHQVDANIKCQTSSRENILPSEQMGFLISEMGPASKPSEDTGLATPARYREHRSNSQQGKSPDLHLLVDVACKQERFPKEEELKE</sequence>
<name>HSF5_HUMAN</name>
<keyword id="KW-0010">Activator</keyword>
<keyword id="KW-0025">Alternative splicing</keyword>
<keyword id="KW-0158">Chromosome</keyword>
<keyword id="KW-0221">Differentiation</keyword>
<keyword id="KW-0238">DNA-binding</keyword>
<keyword id="KW-0469">Meiosis</keyword>
<keyword id="KW-0539">Nucleus</keyword>
<keyword id="KW-0597">Phosphoprotein</keyword>
<keyword id="KW-1267">Proteomics identification</keyword>
<keyword id="KW-1185">Reference proteome</keyword>
<keyword id="KW-0678">Repressor</keyword>
<keyword id="KW-0744">Spermatogenesis</keyword>
<keyword id="KW-0804">Transcription</keyword>
<keyword id="KW-0805">Transcription regulation</keyword>
<proteinExistence type="evidence at protein level"/>